<accession>Q9KD48</accession>
<comment type="catalytic activity">
    <reaction>
        <text>tRNA(Gly) + glycine + ATP = glycyl-tRNA(Gly) + AMP + diphosphate</text>
        <dbReference type="Rhea" id="RHEA:16013"/>
        <dbReference type="Rhea" id="RHEA-COMP:9664"/>
        <dbReference type="Rhea" id="RHEA-COMP:9683"/>
        <dbReference type="ChEBI" id="CHEBI:30616"/>
        <dbReference type="ChEBI" id="CHEBI:33019"/>
        <dbReference type="ChEBI" id="CHEBI:57305"/>
        <dbReference type="ChEBI" id="CHEBI:78442"/>
        <dbReference type="ChEBI" id="CHEBI:78522"/>
        <dbReference type="ChEBI" id="CHEBI:456215"/>
        <dbReference type="EC" id="6.1.1.14"/>
    </reaction>
</comment>
<comment type="subunit">
    <text evidence="1">Tetramer of two alpha and two beta subunits.</text>
</comment>
<comment type="subcellular location">
    <subcellularLocation>
        <location evidence="1">Cytoplasm</location>
    </subcellularLocation>
</comment>
<comment type="similarity">
    <text evidence="2">Belongs to the class-II aminoacyl-tRNA synthetase family.</text>
</comment>
<feature type="chain" id="PRO_0000072893" description="Glycine--tRNA ligase beta subunit">
    <location>
        <begin position="1"/>
        <end position="693"/>
    </location>
</feature>
<keyword id="KW-0030">Aminoacyl-tRNA synthetase</keyword>
<keyword id="KW-0067">ATP-binding</keyword>
<keyword id="KW-0963">Cytoplasm</keyword>
<keyword id="KW-0436">Ligase</keyword>
<keyword id="KW-0547">Nucleotide-binding</keyword>
<keyword id="KW-0648">Protein biosynthesis</keyword>
<keyword id="KW-1185">Reference proteome</keyword>
<name>SYGB_HALH5</name>
<gene>
    <name type="primary">glyS</name>
    <name type="ordered locus">BH1371</name>
</gene>
<protein>
    <recommendedName>
        <fullName>Glycine--tRNA ligase beta subunit</fullName>
        <ecNumber>6.1.1.14</ecNumber>
    </recommendedName>
    <alternativeName>
        <fullName>Glycyl-tRNA synthetase beta subunit</fullName>
        <shortName>GlyRS</shortName>
    </alternativeName>
</protein>
<reference key="1">
    <citation type="journal article" date="2000" name="Nucleic Acids Res.">
        <title>Complete genome sequence of the alkaliphilic bacterium Bacillus halodurans and genomic sequence comparison with Bacillus subtilis.</title>
        <authorList>
            <person name="Takami H."/>
            <person name="Nakasone K."/>
            <person name="Takaki Y."/>
            <person name="Maeno G."/>
            <person name="Sasaki R."/>
            <person name="Masui N."/>
            <person name="Fuji F."/>
            <person name="Hirama C."/>
            <person name="Nakamura Y."/>
            <person name="Ogasawara N."/>
            <person name="Kuhara S."/>
            <person name="Horikoshi K."/>
        </authorList>
    </citation>
    <scope>NUCLEOTIDE SEQUENCE [LARGE SCALE GENOMIC DNA]</scope>
    <source>
        <strain>ATCC BAA-125 / DSM 18197 / FERM 7344 / JCM 9153 / C-125</strain>
    </source>
</reference>
<organism>
    <name type="scientific">Halalkalibacterium halodurans (strain ATCC BAA-125 / DSM 18197 / FERM 7344 / JCM 9153 / C-125)</name>
    <name type="common">Bacillus halodurans</name>
    <dbReference type="NCBI Taxonomy" id="272558"/>
    <lineage>
        <taxon>Bacteria</taxon>
        <taxon>Bacillati</taxon>
        <taxon>Bacillota</taxon>
        <taxon>Bacilli</taxon>
        <taxon>Bacillales</taxon>
        <taxon>Bacillaceae</taxon>
        <taxon>Halalkalibacterium (ex Joshi et al. 2022)</taxon>
    </lineage>
</organism>
<evidence type="ECO:0000250" key="1"/>
<evidence type="ECO:0000305" key="2"/>
<proteinExistence type="inferred from homology"/>
<dbReference type="EC" id="6.1.1.14"/>
<dbReference type="EMBL" id="BA000004">
    <property type="protein sequence ID" value="BAB05090.1"/>
    <property type="molecule type" value="Genomic_DNA"/>
</dbReference>
<dbReference type="PIR" id="C83821">
    <property type="entry name" value="C83821"/>
</dbReference>
<dbReference type="RefSeq" id="WP_010897536.1">
    <property type="nucleotide sequence ID" value="NC_002570.2"/>
</dbReference>
<dbReference type="SMR" id="Q9KD48"/>
<dbReference type="STRING" id="272558.gene:10727265"/>
<dbReference type="KEGG" id="bha:BH1371"/>
<dbReference type="eggNOG" id="COG0751">
    <property type="taxonomic scope" value="Bacteria"/>
</dbReference>
<dbReference type="HOGENOM" id="CLU_007220_2_2_9"/>
<dbReference type="OrthoDB" id="9775440at2"/>
<dbReference type="Proteomes" id="UP000001258">
    <property type="component" value="Chromosome"/>
</dbReference>
<dbReference type="GO" id="GO:0005829">
    <property type="term" value="C:cytosol"/>
    <property type="evidence" value="ECO:0007669"/>
    <property type="project" value="TreeGrafter"/>
</dbReference>
<dbReference type="GO" id="GO:0004814">
    <property type="term" value="F:arginine-tRNA ligase activity"/>
    <property type="evidence" value="ECO:0007669"/>
    <property type="project" value="InterPro"/>
</dbReference>
<dbReference type="GO" id="GO:0005524">
    <property type="term" value="F:ATP binding"/>
    <property type="evidence" value="ECO:0007669"/>
    <property type="project" value="UniProtKB-UniRule"/>
</dbReference>
<dbReference type="GO" id="GO:0004820">
    <property type="term" value="F:glycine-tRNA ligase activity"/>
    <property type="evidence" value="ECO:0007669"/>
    <property type="project" value="UniProtKB-UniRule"/>
</dbReference>
<dbReference type="GO" id="GO:0006420">
    <property type="term" value="P:arginyl-tRNA aminoacylation"/>
    <property type="evidence" value="ECO:0007669"/>
    <property type="project" value="InterPro"/>
</dbReference>
<dbReference type="GO" id="GO:0006426">
    <property type="term" value="P:glycyl-tRNA aminoacylation"/>
    <property type="evidence" value="ECO:0007669"/>
    <property type="project" value="UniProtKB-UniRule"/>
</dbReference>
<dbReference type="Gene3D" id="1.10.730.10">
    <property type="entry name" value="Isoleucyl-tRNA Synthetase, Domain 1"/>
    <property type="match status" value="1"/>
</dbReference>
<dbReference type="HAMAP" id="MF_00255">
    <property type="entry name" value="Gly_tRNA_synth_beta"/>
    <property type="match status" value="1"/>
</dbReference>
<dbReference type="InterPro" id="IPR008909">
    <property type="entry name" value="DALR_anticod-bd"/>
</dbReference>
<dbReference type="InterPro" id="IPR015944">
    <property type="entry name" value="Gly-tRNA-synth_bsu"/>
</dbReference>
<dbReference type="InterPro" id="IPR006194">
    <property type="entry name" value="Gly-tRNA-synth_heterodimer"/>
</dbReference>
<dbReference type="NCBIfam" id="TIGR00211">
    <property type="entry name" value="glyS"/>
    <property type="match status" value="1"/>
</dbReference>
<dbReference type="PANTHER" id="PTHR30075:SF2">
    <property type="entry name" value="GLYCINE--TRNA LIGASE, CHLOROPLASTIC_MITOCHONDRIAL 2"/>
    <property type="match status" value="1"/>
</dbReference>
<dbReference type="PANTHER" id="PTHR30075">
    <property type="entry name" value="GLYCYL-TRNA SYNTHETASE"/>
    <property type="match status" value="1"/>
</dbReference>
<dbReference type="Pfam" id="PF05746">
    <property type="entry name" value="DALR_1"/>
    <property type="match status" value="1"/>
</dbReference>
<dbReference type="Pfam" id="PF02092">
    <property type="entry name" value="tRNA_synt_2f"/>
    <property type="match status" value="1"/>
</dbReference>
<dbReference type="PRINTS" id="PR01045">
    <property type="entry name" value="TRNASYNTHGB"/>
</dbReference>
<dbReference type="SUPFAM" id="SSF109604">
    <property type="entry name" value="HD-domain/PDEase-like"/>
    <property type="match status" value="1"/>
</dbReference>
<dbReference type="PROSITE" id="PS50861">
    <property type="entry name" value="AA_TRNA_LIGASE_II_GLYAB"/>
    <property type="match status" value="1"/>
</dbReference>
<sequence length="693" mass="77834">MSKRDFLLEIGLEELPARFVSDGEKQLADKVESFLKEQRISFEQISSFSTPRRLAVLVIGLAEKQADVEEESRGPAKKIALDESGNWTKAAQGFARGQGVSVDDLYIQEVKGTEYIFAKKFVAGQETASLLPELKELITSLHFPKNMRWHTYSLRYARPIQWLVALYGQEVIPFEITGVAAGLETAGHRFLGENVTIDEPTLYKEKLLQQYVMADSEERKKAIRHQIQSIMEEKDWVIPIDEDLLDEVTNLVEYPTALFGRFDEAFLSLPNEVLITSMREHQRYFPVKNQAGELLPYFVTIRNGDHRHLENIVKGNEKVLRARLSDAAFFYGEDQKLNIDEANKRLDQIVYHEELGSIGDKIKRVKVLAASIAEKLGVTSQTLQAINRVAEICKFDLVTQMVGEFPELQGRMGEVYAEIAGEPPEVAKGIVEHYLPRFAGDQSPSSVQGTVVSLADKLDTIAACFGIGLIPTGSQDPYALRRQAAGVVQILLDHELDLDVDELLLETVEQLQEKELLTVPESEVVKQLREFFALRVKTKLQDEGVRYDLTDAVLASGISNVPVVFKKAKLLVSKVNTPEFKELVEGLSRVTNIAGKAEKNVAINPDLFEKEEERVLYEAYVQTKDLVQGALASGDVSAAYAALEQTIEPIHQYFEHVMVMVDEQVIKENRLALMHAFAGVIGSYANFQEIVFK</sequence>